<proteinExistence type="inferred from homology"/>
<accession>B1AJ25</accession>
<reference key="1">
    <citation type="submission" date="2008-02" db="EMBL/GenBank/DDBJ databases">
        <title>Genome sequence of Ureaplasma parvum serovar 3.</title>
        <authorList>
            <person name="Methe B.A."/>
            <person name="Glass J."/>
            <person name="Waites K."/>
            <person name="Shrivastava S."/>
        </authorList>
    </citation>
    <scope>NUCLEOTIDE SEQUENCE [LARGE SCALE GENOMIC DNA]</scope>
    <source>
        <strain>ATCC 27815 / 27 / NCTC 11736</strain>
    </source>
</reference>
<organism>
    <name type="scientific">Ureaplasma parvum serovar 3 (strain ATCC 27815 / 27 / NCTC 11736)</name>
    <dbReference type="NCBI Taxonomy" id="505682"/>
    <lineage>
        <taxon>Bacteria</taxon>
        <taxon>Bacillati</taxon>
        <taxon>Mycoplasmatota</taxon>
        <taxon>Mycoplasmoidales</taxon>
        <taxon>Mycoplasmoidaceae</taxon>
        <taxon>Ureaplasma</taxon>
    </lineage>
</organism>
<dbReference type="EC" id="2.1.1.199" evidence="1"/>
<dbReference type="EMBL" id="CP000942">
    <property type="protein sequence ID" value="ACA33193.1"/>
    <property type="molecule type" value="Genomic_DNA"/>
</dbReference>
<dbReference type="RefSeq" id="WP_010891758.1">
    <property type="nucleotide sequence ID" value="NC_010503.1"/>
</dbReference>
<dbReference type="SMR" id="B1AJ25"/>
<dbReference type="GeneID" id="29672233"/>
<dbReference type="KEGG" id="upa:UPA3_0402"/>
<dbReference type="HOGENOM" id="CLU_038422_2_0_14"/>
<dbReference type="Proteomes" id="UP000002162">
    <property type="component" value="Chromosome"/>
</dbReference>
<dbReference type="GO" id="GO:0005737">
    <property type="term" value="C:cytoplasm"/>
    <property type="evidence" value="ECO:0007669"/>
    <property type="project" value="UniProtKB-SubCell"/>
</dbReference>
<dbReference type="GO" id="GO:0071424">
    <property type="term" value="F:rRNA (cytosine-N4-)-methyltransferase activity"/>
    <property type="evidence" value="ECO:0007669"/>
    <property type="project" value="UniProtKB-UniRule"/>
</dbReference>
<dbReference type="GO" id="GO:0070475">
    <property type="term" value="P:rRNA base methylation"/>
    <property type="evidence" value="ECO:0007669"/>
    <property type="project" value="UniProtKB-UniRule"/>
</dbReference>
<dbReference type="Gene3D" id="1.10.150.170">
    <property type="entry name" value="Putative methyltransferase TM0872, insert domain"/>
    <property type="match status" value="1"/>
</dbReference>
<dbReference type="Gene3D" id="3.40.50.150">
    <property type="entry name" value="Vaccinia Virus protein VP39"/>
    <property type="match status" value="1"/>
</dbReference>
<dbReference type="HAMAP" id="MF_01007">
    <property type="entry name" value="16SrRNA_methyltr_H"/>
    <property type="match status" value="1"/>
</dbReference>
<dbReference type="InterPro" id="IPR002903">
    <property type="entry name" value="RsmH"/>
</dbReference>
<dbReference type="InterPro" id="IPR023397">
    <property type="entry name" value="SAM-dep_MeTrfase_MraW_recog"/>
</dbReference>
<dbReference type="InterPro" id="IPR029063">
    <property type="entry name" value="SAM-dependent_MTases_sf"/>
</dbReference>
<dbReference type="NCBIfam" id="TIGR00006">
    <property type="entry name" value="16S rRNA (cytosine(1402)-N(4))-methyltransferase RsmH"/>
    <property type="match status" value="1"/>
</dbReference>
<dbReference type="PANTHER" id="PTHR11265:SF0">
    <property type="entry name" value="12S RRNA N4-METHYLCYTIDINE METHYLTRANSFERASE"/>
    <property type="match status" value="1"/>
</dbReference>
<dbReference type="PANTHER" id="PTHR11265">
    <property type="entry name" value="S-ADENOSYL-METHYLTRANSFERASE MRAW"/>
    <property type="match status" value="1"/>
</dbReference>
<dbReference type="Pfam" id="PF01795">
    <property type="entry name" value="Methyltransf_5"/>
    <property type="match status" value="1"/>
</dbReference>
<dbReference type="PIRSF" id="PIRSF004486">
    <property type="entry name" value="MraW"/>
    <property type="match status" value="1"/>
</dbReference>
<dbReference type="SUPFAM" id="SSF81799">
    <property type="entry name" value="Putative methyltransferase TM0872, insert domain"/>
    <property type="match status" value="1"/>
</dbReference>
<dbReference type="SUPFAM" id="SSF53335">
    <property type="entry name" value="S-adenosyl-L-methionine-dependent methyltransferases"/>
    <property type="match status" value="1"/>
</dbReference>
<name>RSMH_UREP2</name>
<gene>
    <name evidence="1" type="primary">rsmH</name>
    <name type="synonym">mraW</name>
    <name type="ordered locus">UPA3_0402</name>
</gene>
<sequence>MEFNQHITVLLNETIELLNIKPDGIYVDCTFGRGGHSQLILKKLSKKGKLICLDQDQEAINFANNLFKNNTNVIVIKTNFKNLKSALSAHKIFYVDGFIFDLGLSSPQLDDPKRGFSYHKNAWLDMRMDQSQNLNAHYIVNNYSFAKLVSIFKRYGEIKYPKIIADAIVKERSIKEINTTLELVEIIKKYSPKKNLFEKKHPARLFFQAIRIEVNDELNILEKAFNDAISMLNPLGVVAIISFHSLEDKIVKKVFNNYAKIKLPKEVPINNYVNKYSLLNQKIMPSTQELNDNNRSRSSILRGLIRNY</sequence>
<keyword id="KW-0963">Cytoplasm</keyword>
<keyword id="KW-0489">Methyltransferase</keyword>
<keyword id="KW-0698">rRNA processing</keyword>
<keyword id="KW-0949">S-adenosyl-L-methionine</keyword>
<keyword id="KW-0808">Transferase</keyword>
<feature type="chain" id="PRO_0000387203" description="Ribosomal RNA small subunit methyltransferase H">
    <location>
        <begin position="1"/>
        <end position="308"/>
    </location>
</feature>
<feature type="binding site" evidence="1">
    <location>
        <begin position="34"/>
        <end position="36"/>
    </location>
    <ligand>
        <name>S-adenosyl-L-methionine</name>
        <dbReference type="ChEBI" id="CHEBI:59789"/>
    </ligand>
</feature>
<feature type="binding site" evidence="1">
    <location>
        <position position="54"/>
    </location>
    <ligand>
        <name>S-adenosyl-L-methionine</name>
        <dbReference type="ChEBI" id="CHEBI:59789"/>
    </ligand>
</feature>
<feature type="binding site" evidence="1">
    <location>
        <position position="80"/>
    </location>
    <ligand>
        <name>S-adenosyl-L-methionine</name>
        <dbReference type="ChEBI" id="CHEBI:59789"/>
    </ligand>
</feature>
<feature type="binding site" evidence="1">
    <location>
        <position position="101"/>
    </location>
    <ligand>
        <name>S-adenosyl-L-methionine</name>
        <dbReference type="ChEBI" id="CHEBI:59789"/>
    </ligand>
</feature>
<feature type="binding site" evidence="1">
    <location>
        <position position="108"/>
    </location>
    <ligand>
        <name>S-adenosyl-L-methionine</name>
        <dbReference type="ChEBI" id="CHEBI:59789"/>
    </ligand>
</feature>
<evidence type="ECO:0000255" key="1">
    <source>
        <dbReference type="HAMAP-Rule" id="MF_01007"/>
    </source>
</evidence>
<comment type="function">
    <text evidence="1">Specifically methylates the N4 position of cytidine in position 1402 (C1402) of 16S rRNA.</text>
</comment>
<comment type="catalytic activity">
    <reaction evidence="1">
        <text>cytidine(1402) in 16S rRNA + S-adenosyl-L-methionine = N(4)-methylcytidine(1402) in 16S rRNA + S-adenosyl-L-homocysteine + H(+)</text>
        <dbReference type="Rhea" id="RHEA:42928"/>
        <dbReference type="Rhea" id="RHEA-COMP:10286"/>
        <dbReference type="Rhea" id="RHEA-COMP:10287"/>
        <dbReference type="ChEBI" id="CHEBI:15378"/>
        <dbReference type="ChEBI" id="CHEBI:57856"/>
        <dbReference type="ChEBI" id="CHEBI:59789"/>
        <dbReference type="ChEBI" id="CHEBI:74506"/>
        <dbReference type="ChEBI" id="CHEBI:82748"/>
        <dbReference type="EC" id="2.1.1.199"/>
    </reaction>
</comment>
<comment type="subcellular location">
    <subcellularLocation>
        <location evidence="1">Cytoplasm</location>
    </subcellularLocation>
</comment>
<comment type="similarity">
    <text evidence="1">Belongs to the methyltransferase superfamily. RsmH family.</text>
</comment>
<protein>
    <recommendedName>
        <fullName evidence="1">Ribosomal RNA small subunit methyltransferase H</fullName>
        <ecNumber evidence="1">2.1.1.199</ecNumber>
    </recommendedName>
    <alternativeName>
        <fullName evidence="1">16S rRNA m(4)C1402 methyltransferase</fullName>
    </alternativeName>
    <alternativeName>
        <fullName evidence="1">rRNA (cytosine-N(4)-)-methyltransferase RsmH</fullName>
    </alternativeName>
</protein>